<sequence>MNTRQSSFSYEEILICGRGEMFGPGNAQLPLPPMLMFNRITDISETGGPNDKGYVRAEFDITPDLWFFPCHFMGDPVMPGCLGLDAMWQLTGFFLGWLGEAGKGRAISTGEVKFTGMVTPKTKLVEYGIDFKRVMRGRLVLGIADGWMKADGETIYKATDLRVGLFQEKAD</sequence>
<keyword id="KW-0963">Cytoplasm</keyword>
<keyword id="KW-0275">Fatty acid biosynthesis</keyword>
<keyword id="KW-0276">Fatty acid metabolism</keyword>
<keyword id="KW-0413">Isomerase</keyword>
<keyword id="KW-0444">Lipid biosynthesis</keyword>
<keyword id="KW-0443">Lipid metabolism</keyword>
<keyword id="KW-0456">Lyase</keyword>
<keyword id="KW-1185">Reference proteome</keyword>
<gene>
    <name evidence="1" type="primary">fabA</name>
    <name type="ordered locus">R00248</name>
    <name type="ORF">SMc00328</name>
</gene>
<name>FABA_RHIME</name>
<accession>Q92SV8</accession>
<comment type="function">
    <text evidence="1">Necessary for the introduction of cis unsaturation into fatty acids. Catalyzes the dehydration of (3R)-3-hydroxydecanoyl-ACP to E-(2)-decenoyl-ACP and then its isomerization to Z-(3)-decenoyl-ACP. Can catalyze the dehydratase reaction for beta-hydroxyacyl-ACPs with saturated chain lengths up to 16:0, being most active on intermediate chain length.</text>
</comment>
<comment type="catalytic activity">
    <reaction evidence="1">
        <text>a (3R)-hydroxyacyl-[ACP] = a (2E)-enoyl-[ACP] + H2O</text>
        <dbReference type="Rhea" id="RHEA:13097"/>
        <dbReference type="Rhea" id="RHEA-COMP:9925"/>
        <dbReference type="Rhea" id="RHEA-COMP:9945"/>
        <dbReference type="ChEBI" id="CHEBI:15377"/>
        <dbReference type="ChEBI" id="CHEBI:78784"/>
        <dbReference type="ChEBI" id="CHEBI:78827"/>
        <dbReference type="EC" id="4.2.1.59"/>
    </reaction>
</comment>
<comment type="catalytic activity">
    <reaction evidence="1">
        <text>(3R)-hydroxydecanoyl-[ACP] = (2E)-decenoyl-[ACP] + H2O</text>
        <dbReference type="Rhea" id="RHEA:41860"/>
        <dbReference type="Rhea" id="RHEA-COMP:9638"/>
        <dbReference type="Rhea" id="RHEA-COMP:9639"/>
        <dbReference type="ChEBI" id="CHEBI:15377"/>
        <dbReference type="ChEBI" id="CHEBI:78466"/>
        <dbReference type="ChEBI" id="CHEBI:78467"/>
    </reaction>
</comment>
<comment type="catalytic activity">
    <reaction evidence="1">
        <text>(2E)-decenoyl-[ACP] = (3Z)-decenoyl-[ACP]</text>
        <dbReference type="Rhea" id="RHEA:23568"/>
        <dbReference type="Rhea" id="RHEA-COMP:9639"/>
        <dbReference type="Rhea" id="RHEA-COMP:9927"/>
        <dbReference type="ChEBI" id="CHEBI:78467"/>
        <dbReference type="ChEBI" id="CHEBI:78798"/>
        <dbReference type="EC" id="5.3.3.14"/>
    </reaction>
</comment>
<comment type="pathway">
    <text evidence="1">Lipid metabolism; fatty acid biosynthesis.</text>
</comment>
<comment type="subunit">
    <text evidence="1">Homodimer.</text>
</comment>
<comment type="subcellular location">
    <subcellularLocation>
        <location evidence="1">Cytoplasm</location>
    </subcellularLocation>
</comment>
<comment type="similarity">
    <text evidence="1">Belongs to the thioester dehydratase family. FabA subfamily.</text>
</comment>
<reference key="1">
    <citation type="journal article" date="2001" name="Proc. Natl. Acad. Sci. U.S.A.">
        <title>Analysis of the chromosome sequence of the legume symbiont Sinorhizobium meliloti strain 1021.</title>
        <authorList>
            <person name="Capela D."/>
            <person name="Barloy-Hubler F."/>
            <person name="Gouzy J."/>
            <person name="Bothe G."/>
            <person name="Ampe F."/>
            <person name="Batut J."/>
            <person name="Boistard P."/>
            <person name="Becker A."/>
            <person name="Boutry M."/>
            <person name="Cadieu E."/>
            <person name="Dreano S."/>
            <person name="Gloux S."/>
            <person name="Godrie T."/>
            <person name="Goffeau A."/>
            <person name="Kahn D."/>
            <person name="Kiss E."/>
            <person name="Lelaure V."/>
            <person name="Masuy D."/>
            <person name="Pohl T."/>
            <person name="Portetelle D."/>
            <person name="Puehler A."/>
            <person name="Purnelle B."/>
            <person name="Ramsperger U."/>
            <person name="Renard C."/>
            <person name="Thebault P."/>
            <person name="Vandenbol M."/>
            <person name="Weidner S."/>
            <person name="Galibert F."/>
        </authorList>
    </citation>
    <scope>NUCLEOTIDE SEQUENCE [LARGE SCALE GENOMIC DNA]</scope>
    <source>
        <strain>1021</strain>
    </source>
</reference>
<reference key="2">
    <citation type="journal article" date="2001" name="Science">
        <title>The composite genome of the legume symbiont Sinorhizobium meliloti.</title>
        <authorList>
            <person name="Galibert F."/>
            <person name="Finan T.M."/>
            <person name="Long S.R."/>
            <person name="Puehler A."/>
            <person name="Abola P."/>
            <person name="Ampe F."/>
            <person name="Barloy-Hubler F."/>
            <person name="Barnett M.J."/>
            <person name="Becker A."/>
            <person name="Boistard P."/>
            <person name="Bothe G."/>
            <person name="Boutry M."/>
            <person name="Bowser L."/>
            <person name="Buhrmester J."/>
            <person name="Cadieu E."/>
            <person name="Capela D."/>
            <person name="Chain P."/>
            <person name="Cowie A."/>
            <person name="Davis R.W."/>
            <person name="Dreano S."/>
            <person name="Federspiel N.A."/>
            <person name="Fisher R.F."/>
            <person name="Gloux S."/>
            <person name="Godrie T."/>
            <person name="Goffeau A."/>
            <person name="Golding B."/>
            <person name="Gouzy J."/>
            <person name="Gurjal M."/>
            <person name="Hernandez-Lucas I."/>
            <person name="Hong A."/>
            <person name="Huizar L."/>
            <person name="Hyman R.W."/>
            <person name="Jones T."/>
            <person name="Kahn D."/>
            <person name="Kahn M.L."/>
            <person name="Kalman S."/>
            <person name="Keating D.H."/>
            <person name="Kiss E."/>
            <person name="Komp C."/>
            <person name="Lelaure V."/>
            <person name="Masuy D."/>
            <person name="Palm C."/>
            <person name="Peck M.C."/>
            <person name="Pohl T.M."/>
            <person name="Portetelle D."/>
            <person name="Purnelle B."/>
            <person name="Ramsperger U."/>
            <person name="Surzycki R."/>
            <person name="Thebault P."/>
            <person name="Vandenbol M."/>
            <person name="Vorhoelter F.J."/>
            <person name="Weidner S."/>
            <person name="Wells D.H."/>
            <person name="Wong K."/>
            <person name="Yeh K.-C."/>
            <person name="Batut J."/>
        </authorList>
    </citation>
    <scope>NUCLEOTIDE SEQUENCE [LARGE SCALE GENOMIC DNA]</scope>
    <source>
        <strain>1021</strain>
    </source>
</reference>
<feature type="chain" id="PRO_0000091610" description="3-hydroxydecanoyl-[acyl-carrier-protein] dehydratase">
    <location>
        <begin position="1"/>
        <end position="171"/>
    </location>
</feature>
<feature type="active site" evidence="1">
    <location>
        <position position="71"/>
    </location>
</feature>
<protein>
    <recommendedName>
        <fullName evidence="1">3-hydroxydecanoyl-[acyl-carrier-protein] dehydratase</fullName>
        <ecNumber evidence="1">4.2.1.59</ecNumber>
    </recommendedName>
    <alternativeName>
        <fullName evidence="1">3-hydroxyacyl-[acyl-carrier-protein] dehydratase FabA</fullName>
    </alternativeName>
    <alternativeName>
        <fullName evidence="1">Beta-hydroxydecanoyl thioester dehydrase</fullName>
    </alternativeName>
    <alternativeName>
        <fullName evidence="1">Trans-2-decenoyl-[acyl-carrier-protein] isomerase</fullName>
        <ecNumber evidence="1">5.3.3.14</ecNumber>
    </alternativeName>
</protein>
<proteinExistence type="inferred from homology"/>
<dbReference type="EC" id="4.2.1.59" evidence="1"/>
<dbReference type="EC" id="5.3.3.14" evidence="1"/>
<dbReference type="EMBL" id="AL591688">
    <property type="protein sequence ID" value="CAC41685.1"/>
    <property type="molecule type" value="Genomic_DNA"/>
</dbReference>
<dbReference type="RefSeq" id="NP_384354.1">
    <property type="nucleotide sequence ID" value="NC_003047.1"/>
</dbReference>
<dbReference type="RefSeq" id="WP_010968449.1">
    <property type="nucleotide sequence ID" value="NC_003047.1"/>
</dbReference>
<dbReference type="SMR" id="Q92SV8"/>
<dbReference type="EnsemblBacteria" id="CAC41685">
    <property type="protein sequence ID" value="CAC41685"/>
    <property type="gene ID" value="SMc00328"/>
</dbReference>
<dbReference type="KEGG" id="sme:SMc00328"/>
<dbReference type="PATRIC" id="fig|266834.11.peg.1615"/>
<dbReference type="eggNOG" id="COG0764">
    <property type="taxonomic scope" value="Bacteria"/>
</dbReference>
<dbReference type="HOGENOM" id="CLU_097925_0_0_5"/>
<dbReference type="OrthoDB" id="9786735at2"/>
<dbReference type="UniPathway" id="UPA00094"/>
<dbReference type="Proteomes" id="UP000001976">
    <property type="component" value="Chromosome"/>
</dbReference>
<dbReference type="GO" id="GO:0005737">
    <property type="term" value="C:cytoplasm"/>
    <property type="evidence" value="ECO:0007669"/>
    <property type="project" value="UniProtKB-SubCell"/>
</dbReference>
<dbReference type="GO" id="GO:0019171">
    <property type="term" value="F:(3R)-hydroxyacyl-[acyl-carrier-protein] dehydratase activity"/>
    <property type="evidence" value="ECO:0007669"/>
    <property type="project" value="UniProtKB-UniRule"/>
</dbReference>
<dbReference type="GO" id="GO:0034017">
    <property type="term" value="F:trans-2-decenoyl-acyl-carrier-protein isomerase activity"/>
    <property type="evidence" value="ECO:0007669"/>
    <property type="project" value="UniProtKB-UniRule"/>
</dbReference>
<dbReference type="GO" id="GO:0006636">
    <property type="term" value="P:unsaturated fatty acid biosynthetic process"/>
    <property type="evidence" value="ECO:0007669"/>
    <property type="project" value="UniProtKB-UniRule"/>
</dbReference>
<dbReference type="CDD" id="cd01287">
    <property type="entry name" value="FabA"/>
    <property type="match status" value="1"/>
</dbReference>
<dbReference type="Gene3D" id="3.10.129.10">
    <property type="entry name" value="Hotdog Thioesterase"/>
    <property type="match status" value="1"/>
</dbReference>
<dbReference type="HAMAP" id="MF_00405">
    <property type="entry name" value="FabA"/>
    <property type="match status" value="1"/>
</dbReference>
<dbReference type="InterPro" id="IPR010083">
    <property type="entry name" value="FabA"/>
</dbReference>
<dbReference type="InterPro" id="IPR013114">
    <property type="entry name" value="FabA_FabZ"/>
</dbReference>
<dbReference type="InterPro" id="IPR029069">
    <property type="entry name" value="HotDog_dom_sf"/>
</dbReference>
<dbReference type="NCBIfam" id="TIGR01749">
    <property type="entry name" value="fabA"/>
    <property type="match status" value="1"/>
</dbReference>
<dbReference type="NCBIfam" id="NF003509">
    <property type="entry name" value="PRK05174.1"/>
    <property type="match status" value="1"/>
</dbReference>
<dbReference type="PANTHER" id="PTHR30272">
    <property type="entry name" value="3-HYDROXYACYL-[ACYL-CARRIER-PROTEIN] DEHYDRATASE"/>
    <property type="match status" value="1"/>
</dbReference>
<dbReference type="PANTHER" id="PTHR30272:SF8">
    <property type="entry name" value="3-HYDROXYDECANOYL-[ACYL-CARRIER-PROTEIN] DEHYDRATASE"/>
    <property type="match status" value="1"/>
</dbReference>
<dbReference type="Pfam" id="PF07977">
    <property type="entry name" value="FabA"/>
    <property type="match status" value="1"/>
</dbReference>
<dbReference type="SUPFAM" id="SSF54637">
    <property type="entry name" value="Thioesterase/thiol ester dehydrase-isomerase"/>
    <property type="match status" value="1"/>
</dbReference>
<evidence type="ECO:0000255" key="1">
    <source>
        <dbReference type="HAMAP-Rule" id="MF_00405"/>
    </source>
</evidence>
<organism>
    <name type="scientific">Rhizobium meliloti (strain 1021)</name>
    <name type="common">Ensifer meliloti</name>
    <name type="synonym">Sinorhizobium meliloti</name>
    <dbReference type="NCBI Taxonomy" id="266834"/>
    <lineage>
        <taxon>Bacteria</taxon>
        <taxon>Pseudomonadati</taxon>
        <taxon>Pseudomonadota</taxon>
        <taxon>Alphaproteobacteria</taxon>
        <taxon>Hyphomicrobiales</taxon>
        <taxon>Rhizobiaceae</taxon>
        <taxon>Sinorhizobium/Ensifer group</taxon>
        <taxon>Sinorhizobium</taxon>
    </lineage>
</organism>